<protein>
    <recommendedName>
        <fullName>Histone H3.2</fullName>
    </recommendedName>
</protein>
<name>H32_TETEL</name>
<accession>P69114</accession>
<accession>P17705</accession>
<sequence>MARTKQTARKSTGAKAPRKQLASKAARKSAPATGGIKKPHR</sequence>
<dbReference type="EMBL" id="X17125">
    <property type="protein sequence ID" value="CAA34984.1"/>
    <property type="molecule type" value="Genomic_DNA"/>
</dbReference>
<dbReference type="PIR" id="S10271">
    <property type="entry name" value="S10271"/>
</dbReference>
<dbReference type="GO" id="GO:0000786">
    <property type="term" value="C:nucleosome"/>
    <property type="evidence" value="ECO:0007669"/>
    <property type="project" value="UniProtKB-KW"/>
</dbReference>
<dbReference type="GO" id="GO:0005634">
    <property type="term" value="C:nucleus"/>
    <property type="evidence" value="ECO:0007669"/>
    <property type="project" value="UniProtKB-SubCell"/>
</dbReference>
<dbReference type="GO" id="GO:0003677">
    <property type="term" value="F:DNA binding"/>
    <property type="evidence" value="ECO:0007669"/>
    <property type="project" value="UniProtKB-KW"/>
</dbReference>
<dbReference type="GO" id="GO:0046982">
    <property type="term" value="F:protein heterodimerization activity"/>
    <property type="evidence" value="ECO:0007669"/>
    <property type="project" value="InterPro"/>
</dbReference>
<dbReference type="GO" id="GO:0030527">
    <property type="term" value="F:structural constituent of chromatin"/>
    <property type="evidence" value="ECO:0007669"/>
    <property type="project" value="InterPro"/>
</dbReference>
<dbReference type="Gene3D" id="1.10.20.10">
    <property type="entry name" value="Histone, subunit A"/>
    <property type="match status" value="1"/>
</dbReference>
<dbReference type="InterPro" id="IPR009072">
    <property type="entry name" value="Histone-fold"/>
</dbReference>
<dbReference type="InterPro" id="IPR000164">
    <property type="entry name" value="Histone_H3/CENP-A"/>
</dbReference>
<dbReference type="PANTHER" id="PTHR11426">
    <property type="entry name" value="HISTONE H3"/>
    <property type="match status" value="1"/>
</dbReference>
<dbReference type="PRINTS" id="PR00622">
    <property type="entry name" value="HISTONEH3"/>
</dbReference>
<dbReference type="SUPFAM" id="SSF47113">
    <property type="entry name" value="Histone-fold"/>
    <property type="match status" value="1"/>
</dbReference>
<dbReference type="PROSITE" id="PS00322">
    <property type="entry name" value="HISTONE_H3_1"/>
    <property type="match status" value="1"/>
</dbReference>
<comment type="function">
    <text>Core component of nucleosome. Nucleosomes wrap and compact DNA into chromatin, limiting DNA accessibility to the cellular machineries which require DNA as a template. Histones thereby play a central role in transcription regulation, DNA repair, DNA replication and chromosomal stability. DNA accessibility is regulated via a complex set of post-translational modifications of histones, also called histone code, and nucleosome remodeling.</text>
</comment>
<comment type="subunit">
    <text>The nucleosome is a histone octamer containing two molecules each of H2A, H2B, H3 and H4 assembled in one H3-H4 heterotetramer and two H2A-H2B heterodimers. The octamer wraps approximately 147 bp of DNA.</text>
</comment>
<comment type="subcellular location">
    <subcellularLocation>
        <location evidence="1">Nucleus</location>
    </subcellularLocation>
    <subcellularLocation>
        <location evidence="1">Chromosome</location>
    </subcellularLocation>
</comment>
<comment type="similarity">
    <text evidence="3">Belongs to the histone H3 family.</text>
</comment>
<feature type="initiator methionine" description="Removed" evidence="1">
    <location>
        <position position="1"/>
    </location>
</feature>
<feature type="chain" id="PRO_0000221336" description="Histone H3.2">
    <location>
        <begin position="2"/>
        <end position="41" status="greater than"/>
    </location>
</feature>
<feature type="region of interest" description="Disordered" evidence="2">
    <location>
        <begin position="1"/>
        <end position="41"/>
    </location>
</feature>
<feature type="non-terminal residue">
    <location>
        <position position="41"/>
    </location>
</feature>
<keyword id="KW-0158">Chromosome</keyword>
<keyword id="KW-0238">DNA-binding</keyword>
<keyword id="KW-0544">Nucleosome core</keyword>
<keyword id="KW-0539">Nucleus</keyword>
<proteinExistence type="inferred from homology"/>
<organism>
    <name type="scientific">Tetrahymena elliotti</name>
    <dbReference type="NCBI Taxonomy" id="5897"/>
    <lineage>
        <taxon>Eukaryota</taxon>
        <taxon>Sar</taxon>
        <taxon>Alveolata</taxon>
        <taxon>Ciliophora</taxon>
        <taxon>Intramacronucleata</taxon>
        <taxon>Oligohymenophorea</taxon>
        <taxon>Hymenostomatida</taxon>
        <taxon>Tetrahymenina</taxon>
        <taxon>Tetrahymenidae</taxon>
        <taxon>Tetrahymena</taxon>
    </lineage>
</organism>
<evidence type="ECO:0000250" key="1"/>
<evidence type="ECO:0000256" key="2">
    <source>
        <dbReference type="SAM" id="MobiDB-lite"/>
    </source>
</evidence>
<evidence type="ECO:0000305" key="3"/>
<reference key="1">
    <citation type="journal article" date="1990" name="Nucleic Acids Res.">
        <title>Characterization of the promoter region of Tetrahymena genes.</title>
        <authorList>
            <person name="Brunk C.F."/>
            <person name="Sadler L.A."/>
        </authorList>
    </citation>
    <scope>NUCLEOTIDE SEQUENCE [GENOMIC DNA]</scope>
</reference>
<reference key="2">
    <citation type="journal article" date="1990" name="J. Mol. Evol.">
        <title>Phylogenetic relationships among Tetrahymena species determined using the polymerase chain reaction.</title>
        <authorList>
            <person name="Brunk C.F."/>
            <person name="Kahn R.W."/>
            <person name="Sadler L.A."/>
        </authorList>
    </citation>
    <scope>NUCLEOTIDE SEQUENCE [GENOMIC DNA]</scope>
</reference>